<sequence length="809" mass="88734">MVMAHFVENFWGEKNNGFDVLYHNMKHGQISTKELADFVRERATIEEAYSRSMTKLAKSASNYSQLGTFAPMWDVFKTSTEKLANCHLDLVRKLQELIKEVQKYGEEQVKSHKKTKEEVAGTLEAVQAIQNITQALQKSKENYTAKCVEQERLKKEGATQREIEKAAVKSKKATDTYKLYVEKYALTKADFEQKMTETAQKFQDIEETHLIHIKEIIGSLSNAVKEIHLQIGQVHEEFINNMANTTIESLIQKFAESKGTGKERPGLIEFEECDPASAVEGIKPRKRKTFALPGIIKKEKDAESVECPDADSLNIPDVDEEGFSIKPEANQNDTKENHFYSSSDSDSEDEEPKRYRIEIKPAHPNNLHHTMASLDELKVSIGNITLSPAVSRHSPVQMNRNSSNEELTKSKPSSLPTEKGTNDLLAWDPLFGSSLESSSAPLTSSSSARPTTPLSLGTLVPPPRPASRPKLASGKLSGINEIPRPFSPPVTSNTSPPPTAPLARAESSSSISSSASLSAANTPTVGVSRGPSPVSLGNQDTLPVAIALTESVNAYFKGADPTKCIVKITGDVTISFPSGIIKVFTSNPSPAVLCFRVKNISRLEQILPNSQLVFSDPSQCDSNTKDFWMNMQAVTIYLKKLSEQNPAASYYNVDVLKYQVSSNGIQSTPLNLATYWKCSASTTDLRVDYKYNPEAMVAPSVLSNIQVVVPVDGGVTNMQSLPPAIWNAEQMKAFWKLSGISEKSDSGGSGSLRAKFDLSEGPSKPTTLAVQFLSEGNTLSGVDIELVGTGYRLSLVKKRFATGRYLADC</sequence>
<comment type="function">
    <text evidence="8 9">Functions in an early step of clathrin-mediated endocytosis. Has both a membrane binding/bending activity and the ability to recruit proteins essential to the formation of functional clathrin-coated pits. Has a lipid-binding activity with a preference for membranes enriched in phosphatidylserine and phosphoinositides (Pi(4,5) biphosphate) like the plasma membrane. Its membrane-bending activity might be important for the subsequent action of clathrin and adaptors in the formation of clathrin-coated vesicles. Involved in adaptor protein complex AP-2-dependent endocytosis of the transferrin receptor, it also functions in the AP-2-independent endocytosis of the LDL receptor.</text>
</comment>
<comment type="subunit">
    <text evidence="1 7 8 10">Homodimer; disulfide-linked (By similarity). May form homotetramer. Interacts with AP2A1. Interacts with EPS15, EPS15R, ITSN1 and ITSN2; recruit those scaffolding proteins which in turn may interact with the adaptor protein complex AP-2 at the plasma membrane. Interacts with DAB2 (via DPF motifs); mediates LDL receptor/LDLR endocytosis.</text>
</comment>
<comment type="interaction">
    <interactant intactId="EBI-6094986">
        <id>Q3UQN2</id>
    </interactant>
    <interactant intactId="EBI-6094986">
        <id>Q3UQN2</id>
        <label>Fcho2</label>
    </interactant>
    <organismsDiffer>false</organismsDiffer>
    <experiments>5</experiments>
</comment>
<comment type="interaction">
    <interactant intactId="EBI-6094986">
        <id>Q3UQN2</id>
    </interactant>
    <interactant intactId="EBI-6095043">
        <id>A7BFV9</id>
        <label>Eps15</label>
    </interactant>
    <organismsDiffer>true</organismsDiffer>
    <experiments>2</experiments>
</comment>
<comment type="interaction">
    <interactant intactId="EBI-6094986">
        <id>Q3UQN2</id>
    </interactant>
    <interactant intactId="EBI-396684">
        <id>P42566</id>
        <label>EPS15</label>
    </interactant>
    <organismsDiffer>true</organismsDiffer>
    <experiments>3</experiments>
</comment>
<comment type="interaction">
    <interactant intactId="EBI-6094986">
        <id>Q3UQN2</id>
    </interactant>
    <interactant intactId="EBI-602041">
        <id>Q15811</id>
        <label>ITSN1</label>
    </interactant>
    <organismsDiffer>true</organismsDiffer>
    <experiments>3</experiments>
</comment>
<comment type="subcellular location">
    <subcellularLocation>
        <location evidence="13 14">Membrane</location>
        <location evidence="13 14">Clathrin-coated pit</location>
        <topology evidence="13 14">Peripheral membrane protein</topology>
        <orientation evidence="13 14">Cytoplasmic side</orientation>
    </subcellularLocation>
    <text>Associated with forming but not mature clathrin-coated vesicles. The recruitment to coated-pits precede the one of clathrin and the adaptor protein complex AP-2.</text>
</comment>
<comment type="alternative products">
    <event type="alternative splicing"/>
    <isoform>
        <id>Q3UQN2-1</id>
        <name>1</name>
        <sequence type="displayed"/>
    </isoform>
    <isoform>
        <id>Q3UQN2-2</id>
        <name>2</name>
        <sequence type="described" ref="VSP_021912 VSP_021913"/>
    </isoform>
    <isoform>
        <id>Q3UQN2-3</id>
        <name>3</name>
        <sequence type="described" ref="VSP_021914 VSP_021915"/>
    </isoform>
</comment>
<comment type="tissue specificity">
    <text evidence="8">Ubiquitously expressed (at protein level).</text>
</comment>
<comment type="PTM">
    <text evidence="8">Ubiquitinated. Mainly undergoes monoubiquitination but also polyubiquitination.</text>
</comment>
<comment type="similarity">
    <text evidence="12">Belongs to the FCHO family.</text>
</comment>
<comment type="sequence caution" evidence="12">
    <conflict type="erroneous initiation">
        <sequence resource="EMBL-CDS" id="AAH52456"/>
    </conflict>
</comment>
<comment type="sequence caution" evidence="12">
    <conflict type="erroneous initiation">
        <sequence resource="EMBL-CDS" id="AAH53718"/>
    </conflict>
</comment>
<comment type="sequence caution" evidence="12">
    <conflict type="erroneous initiation">
        <sequence resource="EMBL-CDS" id="BAC27226"/>
    </conflict>
</comment>
<comment type="sequence caution" evidence="12">
    <conflict type="frameshift">
        <sequence resource="EMBL-CDS" id="BAC27226"/>
    </conflict>
</comment>
<gene>
    <name type="primary">Fcho2</name>
</gene>
<proteinExistence type="evidence at protein level"/>
<accession>Q3UQN2</accession>
<accession>Q3UJ91</accession>
<accession>Q7TMS9</accession>
<accession>Q8C0I2</accession>
<keyword id="KW-0025">Alternative splicing</keyword>
<keyword id="KW-0168">Coated pit</keyword>
<keyword id="KW-0175">Coiled coil</keyword>
<keyword id="KW-1015">Disulfide bond</keyword>
<keyword id="KW-0254">Endocytosis</keyword>
<keyword id="KW-1017">Isopeptide bond</keyword>
<keyword id="KW-0472">Membrane</keyword>
<keyword id="KW-0597">Phosphoprotein</keyword>
<keyword id="KW-1185">Reference proteome</keyword>
<keyword id="KW-0832">Ubl conjugation</keyword>
<organism>
    <name type="scientific">Mus musculus</name>
    <name type="common">Mouse</name>
    <dbReference type="NCBI Taxonomy" id="10090"/>
    <lineage>
        <taxon>Eukaryota</taxon>
        <taxon>Metazoa</taxon>
        <taxon>Chordata</taxon>
        <taxon>Craniata</taxon>
        <taxon>Vertebrata</taxon>
        <taxon>Euteleostomi</taxon>
        <taxon>Mammalia</taxon>
        <taxon>Eutheria</taxon>
        <taxon>Euarchontoglires</taxon>
        <taxon>Glires</taxon>
        <taxon>Rodentia</taxon>
        <taxon>Myomorpha</taxon>
        <taxon>Muroidea</taxon>
        <taxon>Muridae</taxon>
        <taxon>Murinae</taxon>
        <taxon>Mus</taxon>
        <taxon>Mus</taxon>
    </lineage>
</organism>
<evidence type="ECO:0000250" key="1"/>
<evidence type="ECO:0000250" key="2">
    <source>
        <dbReference type="UniProtKB" id="Q0JRZ9"/>
    </source>
</evidence>
<evidence type="ECO:0000255" key="3"/>
<evidence type="ECO:0000255" key="4">
    <source>
        <dbReference type="PROSITE-ProRule" id="PRU00404"/>
    </source>
</evidence>
<evidence type="ECO:0000255" key="5">
    <source>
        <dbReference type="PROSITE-ProRule" id="PRU01077"/>
    </source>
</evidence>
<evidence type="ECO:0000256" key="6">
    <source>
        <dbReference type="SAM" id="MobiDB-lite"/>
    </source>
</evidence>
<evidence type="ECO:0000269" key="7">
    <source>
    </source>
</evidence>
<evidence type="ECO:0000269" key="8">
    <source>
    </source>
</evidence>
<evidence type="ECO:0000269" key="9">
    <source>
    </source>
</evidence>
<evidence type="ECO:0000269" key="10">
    <source>
    </source>
</evidence>
<evidence type="ECO:0000303" key="11">
    <source>
    </source>
</evidence>
<evidence type="ECO:0000305" key="12"/>
<evidence type="ECO:0000305" key="13">
    <source>
    </source>
</evidence>
<evidence type="ECO:0000305" key="14">
    <source>
    </source>
</evidence>
<evidence type="ECO:0007744" key="15">
    <source>
    </source>
</evidence>
<evidence type="ECO:0007744" key="16">
    <source>
    </source>
</evidence>
<name>FCHO2_MOUSE</name>
<feature type="chain" id="PRO_0000266006" description="F-BAR domain only protein 2">
    <location>
        <begin position="1"/>
        <end position="809"/>
    </location>
</feature>
<feature type="domain" description="F-BAR" evidence="5">
    <location>
        <begin position="3"/>
        <end position="250"/>
    </location>
</feature>
<feature type="domain" description="MHD" evidence="4">
    <location>
        <begin position="541"/>
        <end position="808"/>
    </location>
</feature>
<feature type="region of interest" description="Mediates dimerization and binding to membranes enriched in Pi(4,5)-P2 and induces their tubulation">
    <location>
        <begin position="3"/>
        <end position="274"/>
    </location>
</feature>
<feature type="region of interest" description="Disordered" evidence="6">
    <location>
        <begin position="301"/>
        <end position="352"/>
    </location>
</feature>
<feature type="region of interest" description="Disordered" evidence="6">
    <location>
        <begin position="390"/>
        <end position="422"/>
    </location>
</feature>
<feature type="region of interest" description="Disordered" evidence="6">
    <location>
        <begin position="435"/>
        <end position="536"/>
    </location>
</feature>
<feature type="region of interest" description="Mediates interaction with DAB2, EPS15, EPS15R and ITSN1" evidence="1">
    <location>
        <begin position="520"/>
        <end position="809"/>
    </location>
</feature>
<feature type="coiled-coil region" evidence="3">
    <location>
        <begin position="87"/>
        <end position="156"/>
    </location>
</feature>
<feature type="compositionally biased region" description="Polar residues" evidence="6">
    <location>
        <begin position="390"/>
        <end position="416"/>
    </location>
</feature>
<feature type="compositionally biased region" description="Low complexity" evidence="6">
    <location>
        <begin position="435"/>
        <end position="456"/>
    </location>
</feature>
<feature type="compositionally biased region" description="Low complexity" evidence="6">
    <location>
        <begin position="501"/>
        <end position="520"/>
    </location>
</feature>
<feature type="modified residue" description="Phosphoserine" evidence="16">
    <location>
        <position position="312"/>
    </location>
</feature>
<feature type="modified residue" description="Phosphothreonine" evidence="2">
    <location>
        <position position="385"/>
    </location>
</feature>
<feature type="modified residue" description="Phosphoserine" evidence="16">
    <location>
        <position position="387"/>
    </location>
</feature>
<feature type="modified residue" description="Phosphoserine" evidence="15">
    <location>
        <position position="394"/>
    </location>
</feature>
<feature type="modified residue" description="Phosphoserine" evidence="15">
    <location>
        <position position="402"/>
    </location>
</feature>
<feature type="modified residue" description="Phosphoserine" evidence="15 16">
    <location>
        <position position="403"/>
    </location>
</feature>
<feature type="modified residue" description="Phosphoserine" evidence="16">
    <location>
        <position position="487"/>
    </location>
</feature>
<feature type="modified residue" description="Phosphoserine" evidence="16">
    <location>
        <position position="492"/>
    </location>
</feature>
<feature type="modified residue" description="Phosphoserine" evidence="2">
    <location>
        <position position="495"/>
    </location>
</feature>
<feature type="modified residue" description="Phosphoserine" evidence="16">
    <location>
        <position position="507"/>
    </location>
</feature>
<feature type="modified residue" description="Phosphoserine" evidence="16">
    <location>
        <position position="509"/>
    </location>
</feature>
<feature type="modified residue" description="Phosphoserine" evidence="16">
    <location>
        <position position="510"/>
    </location>
</feature>
<feature type="modified residue" description="Phosphoserine" evidence="2">
    <location>
        <position position="532"/>
    </location>
</feature>
<feature type="disulfide bond" description="Interchain (with C-273)" evidence="1">
    <location>
        <position position="147"/>
    </location>
</feature>
<feature type="disulfide bond" description="Interchain (with C-147)" evidence="1">
    <location>
        <position position="273"/>
    </location>
</feature>
<feature type="cross-link" description="Glycyl lysine isopeptide (Lys-Gly) (interchain with G-Cter in SUMO2)" evidence="2">
    <location>
        <position position="297"/>
    </location>
</feature>
<feature type="splice variant" id="VSP_021912" description="In isoform 2." evidence="11">
    <original>RHS</original>
    <variation>GFL</variation>
    <location>
        <begin position="392"/>
        <end position="394"/>
    </location>
</feature>
<feature type="splice variant" id="VSP_021913" description="In isoform 2." evidence="11">
    <location>
        <begin position="395"/>
        <end position="809"/>
    </location>
</feature>
<feature type="splice variant" id="VSP_021914" description="In isoform 3." evidence="11">
    <original>NEELTKSKPSS</original>
    <variation>SKFDIGIGYFM</variation>
    <location>
        <begin position="404"/>
        <end position="414"/>
    </location>
</feature>
<feature type="splice variant" id="VSP_021915" description="In isoform 3." evidence="11">
    <location>
        <begin position="415"/>
        <end position="809"/>
    </location>
</feature>
<feature type="mutagenesis site" description="Loss of function mutant which is unable to promote clathrin coated-pits formation. Cytosolic mutant; when associated with E-73." evidence="7">
    <original>F</original>
    <variation>E</variation>
    <location>
        <position position="38"/>
    </location>
</feature>
<feature type="mutagenesis site" description="Loss of function mutant which is unable to promote clathrin coated-pits formation. Cytosolic mutant; when associated with E-38." evidence="7">
    <original>W</original>
    <variation>E</variation>
    <location>
        <position position="73"/>
    </location>
</feature>
<feature type="mutagenesis site" description="Loss of function mutant which is unable to promote clathrin coated-pits formation. Binds to membrane but is unable to induce membrane tubulation. Induces the formation of large and static clathrin-coated pits." evidence="7">
    <original>L</original>
    <variation>E</variation>
    <location>
        <position position="136"/>
    </location>
</feature>
<feature type="mutagenesis site" description="Loss of function mutant which is unable to promote clathrin coated-pits formation. Cytosolic mutant which is unable to bind and induce membrane tubulation; when associated with E-165." evidence="7">
    <original>K</original>
    <variation>E</variation>
    <location>
        <position position="146"/>
    </location>
</feature>
<feature type="mutagenesis site" description="Loss of function mutant which is unable to promote clathrin coated-pits formation. Cytosolic mutant which is unable to bind and induce membrane tubulation; when associated with E-146." evidence="7">
    <original>K</original>
    <variation>E</variation>
    <location>
        <position position="165"/>
    </location>
</feature>
<feature type="mutagenesis site" description="Loss of function mutant which is unable to promote clathrin coated-pits formation. Binds to membrane but is unable to induce membrane tubulation. Induces the formation of large and static clathrin-coated pits." evidence="7">
    <original>I</original>
    <variation>N</variation>
    <location>
        <position position="268"/>
    </location>
</feature>
<feature type="mutagenesis site" description="Loss of interaction with EPS15 and ITSN1." evidence="7">
    <original>K</original>
    <variation>E</variation>
    <location>
        <position position="797"/>
    </location>
</feature>
<feature type="sequence conflict" description="In Ref. 1; BAC27226." evidence="12" ref="1">
    <original>E</original>
    <variation>K</variation>
    <location>
        <position position="13"/>
    </location>
</feature>
<protein>
    <recommendedName>
        <fullName>F-BAR domain only protein 2</fullName>
    </recommendedName>
</protein>
<reference key="1">
    <citation type="journal article" date="2005" name="Science">
        <title>The transcriptional landscape of the mammalian genome.</title>
        <authorList>
            <person name="Carninci P."/>
            <person name="Kasukawa T."/>
            <person name="Katayama S."/>
            <person name="Gough J."/>
            <person name="Frith M.C."/>
            <person name="Maeda N."/>
            <person name="Oyama R."/>
            <person name="Ravasi T."/>
            <person name="Lenhard B."/>
            <person name="Wells C."/>
            <person name="Kodzius R."/>
            <person name="Shimokawa K."/>
            <person name="Bajic V.B."/>
            <person name="Brenner S.E."/>
            <person name="Batalov S."/>
            <person name="Forrest A.R."/>
            <person name="Zavolan M."/>
            <person name="Davis M.J."/>
            <person name="Wilming L.G."/>
            <person name="Aidinis V."/>
            <person name="Allen J.E."/>
            <person name="Ambesi-Impiombato A."/>
            <person name="Apweiler R."/>
            <person name="Aturaliya R.N."/>
            <person name="Bailey T.L."/>
            <person name="Bansal M."/>
            <person name="Baxter L."/>
            <person name="Beisel K.W."/>
            <person name="Bersano T."/>
            <person name="Bono H."/>
            <person name="Chalk A.M."/>
            <person name="Chiu K.P."/>
            <person name="Choudhary V."/>
            <person name="Christoffels A."/>
            <person name="Clutterbuck D.R."/>
            <person name="Crowe M.L."/>
            <person name="Dalla E."/>
            <person name="Dalrymple B.P."/>
            <person name="de Bono B."/>
            <person name="Della Gatta G."/>
            <person name="di Bernardo D."/>
            <person name="Down T."/>
            <person name="Engstrom P."/>
            <person name="Fagiolini M."/>
            <person name="Faulkner G."/>
            <person name="Fletcher C.F."/>
            <person name="Fukushima T."/>
            <person name="Furuno M."/>
            <person name="Futaki S."/>
            <person name="Gariboldi M."/>
            <person name="Georgii-Hemming P."/>
            <person name="Gingeras T.R."/>
            <person name="Gojobori T."/>
            <person name="Green R.E."/>
            <person name="Gustincich S."/>
            <person name="Harbers M."/>
            <person name="Hayashi Y."/>
            <person name="Hensch T.K."/>
            <person name="Hirokawa N."/>
            <person name="Hill D."/>
            <person name="Huminiecki L."/>
            <person name="Iacono M."/>
            <person name="Ikeo K."/>
            <person name="Iwama A."/>
            <person name="Ishikawa T."/>
            <person name="Jakt M."/>
            <person name="Kanapin A."/>
            <person name="Katoh M."/>
            <person name="Kawasawa Y."/>
            <person name="Kelso J."/>
            <person name="Kitamura H."/>
            <person name="Kitano H."/>
            <person name="Kollias G."/>
            <person name="Krishnan S.P."/>
            <person name="Kruger A."/>
            <person name="Kummerfeld S.K."/>
            <person name="Kurochkin I.V."/>
            <person name="Lareau L.F."/>
            <person name="Lazarevic D."/>
            <person name="Lipovich L."/>
            <person name="Liu J."/>
            <person name="Liuni S."/>
            <person name="McWilliam S."/>
            <person name="Madan Babu M."/>
            <person name="Madera M."/>
            <person name="Marchionni L."/>
            <person name="Matsuda H."/>
            <person name="Matsuzawa S."/>
            <person name="Miki H."/>
            <person name="Mignone F."/>
            <person name="Miyake S."/>
            <person name="Morris K."/>
            <person name="Mottagui-Tabar S."/>
            <person name="Mulder N."/>
            <person name="Nakano N."/>
            <person name="Nakauchi H."/>
            <person name="Ng P."/>
            <person name="Nilsson R."/>
            <person name="Nishiguchi S."/>
            <person name="Nishikawa S."/>
            <person name="Nori F."/>
            <person name="Ohara O."/>
            <person name="Okazaki Y."/>
            <person name="Orlando V."/>
            <person name="Pang K.C."/>
            <person name="Pavan W.J."/>
            <person name="Pavesi G."/>
            <person name="Pesole G."/>
            <person name="Petrovsky N."/>
            <person name="Piazza S."/>
            <person name="Reed J."/>
            <person name="Reid J.F."/>
            <person name="Ring B.Z."/>
            <person name="Ringwald M."/>
            <person name="Rost B."/>
            <person name="Ruan Y."/>
            <person name="Salzberg S.L."/>
            <person name="Sandelin A."/>
            <person name="Schneider C."/>
            <person name="Schoenbach C."/>
            <person name="Sekiguchi K."/>
            <person name="Semple C.A."/>
            <person name="Seno S."/>
            <person name="Sessa L."/>
            <person name="Sheng Y."/>
            <person name="Shibata Y."/>
            <person name="Shimada H."/>
            <person name="Shimada K."/>
            <person name="Silva D."/>
            <person name="Sinclair B."/>
            <person name="Sperling S."/>
            <person name="Stupka E."/>
            <person name="Sugiura K."/>
            <person name="Sultana R."/>
            <person name="Takenaka Y."/>
            <person name="Taki K."/>
            <person name="Tammoja K."/>
            <person name="Tan S.L."/>
            <person name="Tang S."/>
            <person name="Taylor M.S."/>
            <person name="Tegner J."/>
            <person name="Teichmann S.A."/>
            <person name="Ueda H.R."/>
            <person name="van Nimwegen E."/>
            <person name="Verardo R."/>
            <person name="Wei C.L."/>
            <person name="Yagi K."/>
            <person name="Yamanishi H."/>
            <person name="Zabarovsky E."/>
            <person name="Zhu S."/>
            <person name="Zimmer A."/>
            <person name="Hide W."/>
            <person name="Bult C."/>
            <person name="Grimmond S.M."/>
            <person name="Teasdale R.D."/>
            <person name="Liu E.T."/>
            <person name="Brusic V."/>
            <person name="Quackenbush J."/>
            <person name="Wahlestedt C."/>
            <person name="Mattick J.S."/>
            <person name="Hume D.A."/>
            <person name="Kai C."/>
            <person name="Sasaki D."/>
            <person name="Tomaru Y."/>
            <person name="Fukuda S."/>
            <person name="Kanamori-Katayama M."/>
            <person name="Suzuki M."/>
            <person name="Aoki J."/>
            <person name="Arakawa T."/>
            <person name="Iida J."/>
            <person name="Imamura K."/>
            <person name="Itoh M."/>
            <person name="Kato T."/>
            <person name="Kawaji H."/>
            <person name="Kawagashira N."/>
            <person name="Kawashima T."/>
            <person name="Kojima M."/>
            <person name="Kondo S."/>
            <person name="Konno H."/>
            <person name="Nakano K."/>
            <person name="Ninomiya N."/>
            <person name="Nishio T."/>
            <person name="Okada M."/>
            <person name="Plessy C."/>
            <person name="Shibata K."/>
            <person name="Shiraki T."/>
            <person name="Suzuki S."/>
            <person name="Tagami M."/>
            <person name="Waki K."/>
            <person name="Watahiki A."/>
            <person name="Okamura-Oho Y."/>
            <person name="Suzuki H."/>
            <person name="Kawai J."/>
            <person name="Hayashizaki Y."/>
        </authorList>
    </citation>
    <scope>NUCLEOTIDE SEQUENCE [LARGE SCALE MRNA] (ISOFORMS 1; 2 AND 3)</scope>
    <source>
        <strain>C57BL/6J</strain>
        <tissue>Amnion</tissue>
        <tissue>Heart</tissue>
        <tissue>Thymus</tissue>
    </source>
</reference>
<reference key="2">
    <citation type="journal article" date="2004" name="Genome Res.">
        <title>The status, quality, and expansion of the NIH full-length cDNA project: the Mammalian Gene Collection (MGC).</title>
        <authorList>
            <consortium name="The MGC Project Team"/>
        </authorList>
    </citation>
    <scope>NUCLEOTIDE SEQUENCE [LARGE SCALE MRNA] (ISOFORM 1)</scope>
    <source>
        <strain>C57BL/6J</strain>
        <tissue>Brain</tissue>
    </source>
</reference>
<reference key="3">
    <citation type="journal article" date="2007" name="Proc. Natl. Acad. Sci. U.S.A.">
        <title>Large-scale phosphorylation analysis of mouse liver.</title>
        <authorList>
            <person name="Villen J."/>
            <person name="Beausoleil S.A."/>
            <person name="Gerber S.A."/>
            <person name="Gygi S.P."/>
        </authorList>
    </citation>
    <scope>PHOSPHORYLATION [LARGE SCALE ANALYSIS] AT SER-394; SER-402 AND SER-403</scope>
    <scope>IDENTIFICATION BY MASS SPECTROMETRY [LARGE SCALE ANALYSIS]</scope>
    <source>
        <tissue>Liver</tissue>
    </source>
</reference>
<reference key="4">
    <citation type="journal article" date="2010" name="Cell">
        <title>A tissue-specific atlas of mouse protein phosphorylation and expression.</title>
        <authorList>
            <person name="Huttlin E.L."/>
            <person name="Jedrychowski M.P."/>
            <person name="Elias J.E."/>
            <person name="Goswami T."/>
            <person name="Rad R."/>
            <person name="Beausoleil S.A."/>
            <person name="Villen J."/>
            <person name="Haas W."/>
            <person name="Sowa M.E."/>
            <person name="Gygi S.P."/>
        </authorList>
    </citation>
    <scope>PHOSPHORYLATION [LARGE SCALE ANALYSIS] AT SER-312; SER-387; SER-403; SER-487; SER-492; SER-507; SER-509 AND SER-510</scope>
    <scope>IDENTIFICATION BY MASS SPECTROMETRY [LARGE SCALE ANALYSIS]</scope>
    <source>
        <tissue>Brain</tissue>
        <tissue>Brown adipose tissue</tissue>
        <tissue>Heart</tissue>
        <tissue>Kidney</tissue>
        <tissue>Liver</tissue>
        <tissue>Lung</tissue>
        <tissue>Pancreas</tissue>
        <tissue>Spleen</tissue>
        <tissue>Testis</tissue>
    </source>
</reference>
<reference key="5">
    <citation type="journal article" date="2010" name="Science">
        <title>FCHo proteins are nucleators of clathrin-mediated endocytosis.</title>
        <authorList>
            <person name="Henne W.M."/>
            <person name="Boucrot E."/>
            <person name="Meinecke M."/>
            <person name="Evergren E."/>
            <person name="Vallis Y."/>
            <person name="Mittal R."/>
            <person name="McMahon H.T."/>
        </authorList>
    </citation>
    <scope>SUBCELLULAR LOCATION</scope>
    <scope>INTERACTION WITH EPS15; EPS15R; ITSN1 AND ITSN2</scope>
    <scope>MUTAGENESIS OF PHE-38; TRP-73; LEU-136; LYS-146; LYS-165; ILE-268 AND LYS-797</scope>
</reference>
<reference key="6">
    <citation type="journal article" date="2011" name="Genes Cells">
        <title>Characterization of the EFC/F-BAR domain protein, FCHO2.</title>
        <authorList>
            <person name="Uezu A."/>
            <person name="Umeda K."/>
            <person name="Tsujita K."/>
            <person name="Suetsugu S."/>
            <person name="Takenawa T."/>
            <person name="Nakanishi H."/>
        </authorList>
    </citation>
    <scope>FUNCTION IN LIPID-BINDING</scope>
    <scope>SUBCELLULAR LOCATION</scope>
    <scope>HOMOOLIGOMERIZATION</scope>
    <scope>INTERACTION WITH EPS15</scope>
    <scope>UBIQUITINATION</scope>
    <scope>TISSUE SPECIFICITY</scope>
</reference>
<reference key="7">
    <citation type="journal article" date="2011" name="Traffic">
        <title>Hotspots organize clathrin-mediated endocytosis by efficient recruitment and retention of nucleating resources.</title>
        <authorList>
            <person name="Nunez D."/>
            <person name="Antonescu C."/>
            <person name="Mettlen M."/>
            <person name="Liu A."/>
            <person name="Schmid S.L."/>
            <person name="Loerke D."/>
            <person name="Danuser G."/>
        </authorList>
    </citation>
    <scope>FUNCTION IN CCV NUCLEATION</scope>
</reference>
<reference key="8">
    <citation type="journal article" date="2012" name="Mol. Biol. Cell">
        <title>FCH domain only-2 organizes clathrin-coated structures and interacts with Disabled-2 for low-density lipoprotein receptor endocytosis.</title>
        <authorList>
            <person name="Mulkearns E.E."/>
            <person name="Cooper J.A."/>
        </authorList>
    </citation>
    <scope>INTERACTION WITH DAB2</scope>
</reference>
<dbReference type="EMBL" id="AK031041">
    <property type="protein sequence ID" value="BAC27226.1"/>
    <property type="status" value="ALT_INIT"/>
    <property type="molecule type" value="mRNA"/>
</dbReference>
<dbReference type="EMBL" id="AK142282">
    <property type="protein sequence ID" value="BAE25007.1"/>
    <property type="molecule type" value="mRNA"/>
</dbReference>
<dbReference type="EMBL" id="AK146566">
    <property type="protein sequence ID" value="BAE27264.1"/>
    <property type="molecule type" value="mRNA"/>
</dbReference>
<dbReference type="EMBL" id="BC052456">
    <property type="protein sequence ID" value="AAH52456.1"/>
    <property type="status" value="ALT_INIT"/>
    <property type="molecule type" value="mRNA"/>
</dbReference>
<dbReference type="EMBL" id="BC053718">
    <property type="protein sequence ID" value="AAH53718.1"/>
    <property type="status" value="ALT_INIT"/>
    <property type="molecule type" value="mRNA"/>
</dbReference>
<dbReference type="CCDS" id="CCDS56897.1">
    <molecule id="Q3UQN2-1"/>
</dbReference>
<dbReference type="RefSeq" id="NP_766179.2">
    <molecule id="Q3UQN2-1"/>
    <property type="nucleotide sequence ID" value="NM_172591.3"/>
</dbReference>
<dbReference type="SMR" id="Q3UQN2"/>
<dbReference type="BioGRID" id="230041">
    <property type="interactions" value="51"/>
</dbReference>
<dbReference type="DIP" id="DIP-29489N"/>
<dbReference type="FunCoup" id="Q3UQN2">
    <property type="interactions" value="2791"/>
</dbReference>
<dbReference type="IntAct" id="Q3UQN2">
    <property type="interactions" value="18"/>
</dbReference>
<dbReference type="MINT" id="Q3UQN2"/>
<dbReference type="STRING" id="10090.ENSMUSP00000042959"/>
<dbReference type="GlyGen" id="Q3UQN2">
    <property type="glycosylation" value="3 sites, 1 N-linked glycan (1 site), 1 O-linked glycan (1 site)"/>
</dbReference>
<dbReference type="iPTMnet" id="Q3UQN2"/>
<dbReference type="PhosphoSitePlus" id="Q3UQN2"/>
<dbReference type="jPOST" id="Q3UQN2"/>
<dbReference type="PaxDb" id="10090-ENSMUSP00000042959"/>
<dbReference type="PeptideAtlas" id="Q3UQN2"/>
<dbReference type="ProteomicsDB" id="271734">
    <molecule id="Q3UQN2-1"/>
</dbReference>
<dbReference type="ProteomicsDB" id="271735">
    <molecule id="Q3UQN2-2"/>
</dbReference>
<dbReference type="ProteomicsDB" id="271736">
    <molecule id="Q3UQN2-3"/>
</dbReference>
<dbReference type="Pumba" id="Q3UQN2"/>
<dbReference type="Antibodypedia" id="48744">
    <property type="antibodies" value="139 antibodies from 23 providers"/>
</dbReference>
<dbReference type="DNASU" id="218503"/>
<dbReference type="Ensembl" id="ENSMUST00000040340.16">
    <molecule id="Q3UQN2-1"/>
    <property type="protein sequence ID" value="ENSMUSP00000042959.9"/>
    <property type="gene ID" value="ENSMUSG00000041685.18"/>
</dbReference>
<dbReference type="Ensembl" id="ENSMUST00000109403.2">
    <molecule id="Q3UQN2-2"/>
    <property type="protein sequence ID" value="ENSMUSP00000105030.2"/>
    <property type="gene ID" value="ENSMUSG00000041685.18"/>
</dbReference>
<dbReference type="GeneID" id="218503"/>
<dbReference type="KEGG" id="mmu:218503"/>
<dbReference type="UCSC" id="uc011zdl.2">
    <molecule id="Q3UQN2-2"/>
    <property type="organism name" value="mouse"/>
</dbReference>
<dbReference type="UCSC" id="uc033gnc.1">
    <molecule id="Q3UQN2-1"/>
    <property type="organism name" value="mouse"/>
</dbReference>
<dbReference type="AGR" id="MGI:3505790"/>
<dbReference type="CTD" id="115548"/>
<dbReference type="MGI" id="MGI:3505790">
    <property type="gene designation" value="Fcho2"/>
</dbReference>
<dbReference type="VEuPathDB" id="HostDB:ENSMUSG00000041685"/>
<dbReference type="eggNOG" id="KOG2398">
    <property type="taxonomic scope" value="Eukaryota"/>
</dbReference>
<dbReference type="GeneTree" id="ENSGT00940000157105"/>
<dbReference type="HOGENOM" id="CLU_007107_0_0_1"/>
<dbReference type="InParanoid" id="Q3UQN2"/>
<dbReference type="OMA" id="XKFQDIE"/>
<dbReference type="OrthoDB" id="5593455at2759"/>
<dbReference type="PhylomeDB" id="Q3UQN2"/>
<dbReference type="TreeFam" id="TF328986"/>
<dbReference type="Reactome" id="R-MMU-8856825">
    <property type="pathway name" value="Cargo recognition for clathrin-mediated endocytosis"/>
</dbReference>
<dbReference type="Reactome" id="R-MMU-8856828">
    <property type="pathway name" value="Clathrin-mediated endocytosis"/>
</dbReference>
<dbReference type="BioGRID-ORCS" id="218503">
    <property type="hits" value="6 hits in 79 CRISPR screens"/>
</dbReference>
<dbReference type="ChiTaRS" id="Fcho2">
    <property type="organism name" value="mouse"/>
</dbReference>
<dbReference type="PRO" id="PR:Q3UQN2"/>
<dbReference type="Proteomes" id="UP000000589">
    <property type="component" value="Chromosome 13"/>
</dbReference>
<dbReference type="RNAct" id="Q3UQN2">
    <property type="molecule type" value="protein"/>
</dbReference>
<dbReference type="Bgee" id="ENSMUSG00000041685">
    <property type="expression patterns" value="Expressed in dorsal pancreas and 229 other cell types or tissues"/>
</dbReference>
<dbReference type="ExpressionAtlas" id="Q3UQN2">
    <property type="expression patterns" value="baseline and differential"/>
</dbReference>
<dbReference type="GO" id="GO:0005905">
    <property type="term" value="C:clathrin-coated pit"/>
    <property type="evidence" value="ECO:0000314"/>
    <property type="project" value="UniProtKB"/>
</dbReference>
<dbReference type="GO" id="GO:0030136">
    <property type="term" value="C:clathrin-coated vesicle"/>
    <property type="evidence" value="ECO:0000314"/>
    <property type="project" value="UniProtKB"/>
</dbReference>
<dbReference type="GO" id="GO:0005886">
    <property type="term" value="C:plasma membrane"/>
    <property type="evidence" value="ECO:0000314"/>
    <property type="project" value="UniProtKB"/>
</dbReference>
<dbReference type="GO" id="GO:0098793">
    <property type="term" value="C:presynapse"/>
    <property type="evidence" value="ECO:0007669"/>
    <property type="project" value="GOC"/>
</dbReference>
<dbReference type="GO" id="GO:0042802">
    <property type="term" value="F:identical protein binding"/>
    <property type="evidence" value="ECO:0000353"/>
    <property type="project" value="IntAct"/>
</dbReference>
<dbReference type="GO" id="GO:0035091">
    <property type="term" value="F:phosphatidylinositol binding"/>
    <property type="evidence" value="ECO:0000314"/>
    <property type="project" value="UniProtKB"/>
</dbReference>
<dbReference type="GO" id="GO:0005546">
    <property type="term" value="F:phosphatidylinositol-4,5-bisphosphate binding"/>
    <property type="evidence" value="ECO:0000314"/>
    <property type="project" value="UniProtKB"/>
</dbReference>
<dbReference type="GO" id="GO:0001786">
    <property type="term" value="F:phosphatidylserine binding"/>
    <property type="evidence" value="ECO:0000314"/>
    <property type="project" value="UniProtKB"/>
</dbReference>
<dbReference type="GO" id="GO:0048268">
    <property type="term" value="P:clathrin coat assembly"/>
    <property type="evidence" value="ECO:0000250"/>
    <property type="project" value="UniProtKB"/>
</dbReference>
<dbReference type="GO" id="GO:0072583">
    <property type="term" value="P:clathrin-dependent endocytosis"/>
    <property type="evidence" value="ECO:0000250"/>
    <property type="project" value="UniProtKB"/>
</dbReference>
<dbReference type="GO" id="GO:0010324">
    <property type="term" value="P:membrane invagination"/>
    <property type="evidence" value="ECO:0000314"/>
    <property type="project" value="UniProtKB"/>
</dbReference>
<dbReference type="GO" id="GO:0072659">
    <property type="term" value="P:protein localization to plasma membrane"/>
    <property type="evidence" value="ECO:0000315"/>
    <property type="project" value="UniProtKB"/>
</dbReference>
<dbReference type="GO" id="GO:0048488">
    <property type="term" value="P:synaptic vesicle endocytosis"/>
    <property type="evidence" value="ECO:0000316"/>
    <property type="project" value="ParkinsonsUK-UCL"/>
</dbReference>
<dbReference type="CDD" id="cd07673">
    <property type="entry name" value="F-BAR_FCHO2"/>
    <property type="match status" value="1"/>
</dbReference>
<dbReference type="CDD" id="cd09267">
    <property type="entry name" value="FCHo2_MHD"/>
    <property type="match status" value="1"/>
</dbReference>
<dbReference type="FunFam" id="1.20.1270.60:FF:000016">
    <property type="entry name" value="FCH domain only protein 2"/>
    <property type="match status" value="1"/>
</dbReference>
<dbReference type="FunFam" id="2.60.40.1170:FF:000005">
    <property type="entry name" value="SH3-containing GRB2-like protein 3-interacting protein 1 isoform X3"/>
    <property type="match status" value="1"/>
</dbReference>
<dbReference type="Gene3D" id="1.20.1270.60">
    <property type="entry name" value="Arfaptin homology (AH) domain/BAR domain"/>
    <property type="match status" value="1"/>
</dbReference>
<dbReference type="InterPro" id="IPR027267">
    <property type="entry name" value="AH/BAR_dom_sf"/>
</dbReference>
<dbReference type="InterPro" id="IPR031160">
    <property type="entry name" value="F_BAR"/>
</dbReference>
<dbReference type="InterPro" id="IPR001060">
    <property type="entry name" value="FCH_dom"/>
</dbReference>
<dbReference type="InterPro" id="IPR030122">
    <property type="entry name" value="FCHo2_F-BAR"/>
</dbReference>
<dbReference type="InterPro" id="IPR054713">
    <property type="entry name" value="GMIP/FCHO2-like_FCH"/>
</dbReference>
<dbReference type="InterPro" id="IPR028565">
    <property type="entry name" value="MHD"/>
</dbReference>
<dbReference type="InterPro" id="IPR018808">
    <property type="entry name" value="Muniscin_C"/>
</dbReference>
<dbReference type="PANTHER" id="PTHR23065:SF8">
    <property type="entry name" value="F-BAR DOMAIN ONLY PROTEIN 2"/>
    <property type="match status" value="1"/>
</dbReference>
<dbReference type="PANTHER" id="PTHR23065">
    <property type="entry name" value="PROLINE-SERINE-THREONINE PHOSPHATASE INTERACTING PROTEIN 1"/>
    <property type="match status" value="1"/>
</dbReference>
<dbReference type="Pfam" id="PF22699">
    <property type="entry name" value="GMIP-like_FCH"/>
    <property type="match status" value="1"/>
</dbReference>
<dbReference type="Pfam" id="PF10291">
    <property type="entry name" value="muHD"/>
    <property type="match status" value="1"/>
</dbReference>
<dbReference type="SMART" id="SM00055">
    <property type="entry name" value="FCH"/>
    <property type="match status" value="1"/>
</dbReference>
<dbReference type="SUPFAM" id="SSF103657">
    <property type="entry name" value="BAR/IMD domain-like"/>
    <property type="match status" value="1"/>
</dbReference>
<dbReference type="PROSITE" id="PS51741">
    <property type="entry name" value="F_BAR"/>
    <property type="match status" value="1"/>
</dbReference>
<dbReference type="PROSITE" id="PS51072">
    <property type="entry name" value="MHD"/>
    <property type="match status" value="1"/>
</dbReference>